<keyword id="KW-0963">Cytoplasm</keyword>
<keyword id="KW-0448">Lipopolysaccharide biosynthesis</keyword>
<keyword id="KW-0808">Transferase</keyword>
<reference key="1">
    <citation type="journal article" date="2009" name="PLoS Pathog.">
        <title>Molecular evolutionary consequences of niche restriction in Francisella tularensis, a facultative intracellular pathogen.</title>
        <authorList>
            <person name="Larsson P."/>
            <person name="Elfsmark D."/>
            <person name="Svensson K."/>
            <person name="Wikstroem P."/>
            <person name="Forsman M."/>
            <person name="Brettin T."/>
            <person name="Keim P."/>
            <person name="Johansson A."/>
        </authorList>
    </citation>
    <scope>NUCLEOTIDE SEQUENCE [LARGE SCALE GENOMIC DNA]</scope>
    <source>
        <strain>FSC147</strain>
    </source>
</reference>
<gene>
    <name evidence="1" type="primary">kdsA</name>
    <name type="ordered locus">FTM_1383</name>
</gene>
<feature type="chain" id="PRO_1000117781" description="2-dehydro-3-deoxyphosphooctonate aldolase">
    <location>
        <begin position="1"/>
        <end position="275"/>
    </location>
</feature>
<accession>B2SDK5</accession>
<comment type="catalytic activity">
    <reaction evidence="1">
        <text>D-arabinose 5-phosphate + phosphoenolpyruvate + H2O = 3-deoxy-alpha-D-manno-2-octulosonate-8-phosphate + phosphate</text>
        <dbReference type="Rhea" id="RHEA:14053"/>
        <dbReference type="ChEBI" id="CHEBI:15377"/>
        <dbReference type="ChEBI" id="CHEBI:43474"/>
        <dbReference type="ChEBI" id="CHEBI:57693"/>
        <dbReference type="ChEBI" id="CHEBI:58702"/>
        <dbReference type="ChEBI" id="CHEBI:85985"/>
        <dbReference type="EC" id="2.5.1.55"/>
    </reaction>
</comment>
<comment type="pathway">
    <text evidence="1">Carbohydrate biosynthesis; 3-deoxy-D-manno-octulosonate biosynthesis; 3-deoxy-D-manno-octulosonate from D-ribulose 5-phosphate: step 2/3.</text>
</comment>
<comment type="pathway">
    <text evidence="1">Bacterial outer membrane biogenesis; lipopolysaccharide biosynthesis.</text>
</comment>
<comment type="subcellular location">
    <subcellularLocation>
        <location evidence="1">Cytoplasm</location>
    </subcellularLocation>
</comment>
<comment type="similarity">
    <text evidence="1">Belongs to the KdsA family.</text>
</comment>
<dbReference type="EC" id="2.5.1.55" evidence="1"/>
<dbReference type="EMBL" id="CP000915">
    <property type="protein sequence ID" value="ACD31219.1"/>
    <property type="molecule type" value="Genomic_DNA"/>
</dbReference>
<dbReference type="SMR" id="B2SDK5"/>
<dbReference type="KEGG" id="ftm:FTM_1383"/>
<dbReference type="HOGENOM" id="CLU_036666_0_0_6"/>
<dbReference type="UniPathway" id="UPA00030"/>
<dbReference type="UniPathway" id="UPA00357">
    <property type="reaction ID" value="UER00474"/>
</dbReference>
<dbReference type="GO" id="GO:0005737">
    <property type="term" value="C:cytoplasm"/>
    <property type="evidence" value="ECO:0007669"/>
    <property type="project" value="UniProtKB-SubCell"/>
</dbReference>
<dbReference type="GO" id="GO:0008676">
    <property type="term" value="F:3-deoxy-8-phosphooctulonate synthase activity"/>
    <property type="evidence" value="ECO:0007669"/>
    <property type="project" value="UniProtKB-UniRule"/>
</dbReference>
<dbReference type="GO" id="GO:0019294">
    <property type="term" value="P:keto-3-deoxy-D-manno-octulosonic acid biosynthetic process"/>
    <property type="evidence" value="ECO:0007669"/>
    <property type="project" value="UniProtKB-UniRule"/>
</dbReference>
<dbReference type="Gene3D" id="3.20.20.70">
    <property type="entry name" value="Aldolase class I"/>
    <property type="match status" value="1"/>
</dbReference>
<dbReference type="HAMAP" id="MF_00056">
    <property type="entry name" value="KDO8P_synth"/>
    <property type="match status" value="1"/>
</dbReference>
<dbReference type="InterPro" id="IPR013785">
    <property type="entry name" value="Aldolase_TIM"/>
</dbReference>
<dbReference type="InterPro" id="IPR006218">
    <property type="entry name" value="DAHP1/KDSA"/>
</dbReference>
<dbReference type="InterPro" id="IPR006269">
    <property type="entry name" value="KDO8P_synthase"/>
</dbReference>
<dbReference type="NCBIfam" id="TIGR01362">
    <property type="entry name" value="KDO8P_synth"/>
    <property type="match status" value="1"/>
</dbReference>
<dbReference type="NCBIfam" id="NF003543">
    <property type="entry name" value="PRK05198.1"/>
    <property type="match status" value="1"/>
</dbReference>
<dbReference type="PANTHER" id="PTHR21057">
    <property type="entry name" value="PHOSPHO-2-DEHYDRO-3-DEOXYHEPTONATE ALDOLASE"/>
    <property type="match status" value="1"/>
</dbReference>
<dbReference type="Pfam" id="PF00793">
    <property type="entry name" value="DAHP_synth_1"/>
    <property type="match status" value="1"/>
</dbReference>
<dbReference type="SUPFAM" id="SSF51569">
    <property type="entry name" value="Aldolase"/>
    <property type="match status" value="1"/>
</dbReference>
<name>KDSA_FRATM</name>
<evidence type="ECO:0000255" key="1">
    <source>
        <dbReference type="HAMAP-Rule" id="MF_00056"/>
    </source>
</evidence>
<sequence length="275" mass="30122">MKIANFEVGNGKPFFLMSGPCVIESEQMAMDTAGYLAEVTKDLGINFVYKSSFDKANRSSINSFRGLGVDKGLEILAKVKKTYNVPVVTDVHEDTPFAEVAEVVDVLQTPAFLCRQTNFILEVCKQGKPVNIKKGQFLAPWDMQHVVTKAKSTGNEQIMVCERGVSFGYNNLVSDMRSLEIMKATGCPVVFDATHSVQLPGGQGSSSGGQREFVPVLSKAAMAVGIDGLFMETHPNPDEAKSDGLNSFPMYKIKEFLSLLKELDHLVKSQPKTEL</sequence>
<proteinExistence type="inferred from homology"/>
<protein>
    <recommendedName>
        <fullName evidence="1">2-dehydro-3-deoxyphosphooctonate aldolase</fullName>
        <ecNumber evidence="1">2.5.1.55</ecNumber>
    </recommendedName>
    <alternativeName>
        <fullName evidence="1">3-deoxy-D-manno-octulosonic acid 8-phosphate synthase</fullName>
    </alternativeName>
    <alternativeName>
        <fullName evidence="1">KDO-8-phosphate synthase</fullName>
        <shortName evidence="1">KDO 8-P synthase</shortName>
        <shortName evidence="1">KDOPS</shortName>
    </alternativeName>
    <alternativeName>
        <fullName evidence="1">Phospho-2-dehydro-3-deoxyoctonate aldolase</fullName>
    </alternativeName>
</protein>
<organism>
    <name type="scientific">Francisella tularensis subsp. mediasiatica (strain FSC147)</name>
    <dbReference type="NCBI Taxonomy" id="441952"/>
    <lineage>
        <taxon>Bacteria</taxon>
        <taxon>Pseudomonadati</taxon>
        <taxon>Pseudomonadota</taxon>
        <taxon>Gammaproteobacteria</taxon>
        <taxon>Thiotrichales</taxon>
        <taxon>Francisellaceae</taxon>
        <taxon>Francisella</taxon>
    </lineage>
</organism>